<proteinExistence type="inferred from homology"/>
<feature type="chain" id="PRO_0000353799" description="UPF0676 protein C1494.01">
    <location>
        <begin position="1"/>
        <end position="321"/>
    </location>
</feature>
<feature type="domain" description="Fe2OG dioxygenase" evidence="1">
    <location>
        <begin position="159"/>
        <end position="267"/>
    </location>
</feature>
<keyword id="KW-0963">Cytoplasm</keyword>
<keyword id="KW-0539">Nucleus</keyword>
<keyword id="KW-1185">Reference proteome</keyword>
<accession>Q7LL04</accession>
<organism>
    <name type="scientific">Schizosaccharomyces pombe (strain 972 / ATCC 24843)</name>
    <name type="common">Fission yeast</name>
    <dbReference type="NCBI Taxonomy" id="284812"/>
    <lineage>
        <taxon>Eukaryota</taxon>
        <taxon>Fungi</taxon>
        <taxon>Dikarya</taxon>
        <taxon>Ascomycota</taxon>
        <taxon>Taphrinomycotina</taxon>
        <taxon>Schizosaccharomycetes</taxon>
        <taxon>Schizosaccharomycetales</taxon>
        <taxon>Schizosaccharomycetaceae</taxon>
        <taxon>Schizosaccharomyces</taxon>
    </lineage>
</organism>
<dbReference type="EMBL" id="CU329672">
    <property type="protein sequence ID" value="CAA19075.2"/>
    <property type="molecule type" value="Genomic_DNA"/>
</dbReference>
<dbReference type="RefSeq" id="NP_588526.2">
    <property type="nucleotide sequence ID" value="NM_001023514.2"/>
</dbReference>
<dbReference type="SMR" id="Q7LL04"/>
<dbReference type="FunCoup" id="Q7LL04">
    <property type="interactions" value="7"/>
</dbReference>
<dbReference type="STRING" id="284812.Q7LL04"/>
<dbReference type="PaxDb" id="4896-SPCC1494.01.1"/>
<dbReference type="EnsemblFungi" id="SPCC1494.01.1">
    <property type="protein sequence ID" value="SPCC1494.01.1:pep"/>
    <property type="gene ID" value="SPCC1494.01"/>
</dbReference>
<dbReference type="KEGG" id="spo:2539234"/>
<dbReference type="PomBase" id="SPCC1494.01"/>
<dbReference type="VEuPathDB" id="FungiDB:SPCC1494.01"/>
<dbReference type="eggNOG" id="KOG0143">
    <property type="taxonomic scope" value="Eukaryota"/>
</dbReference>
<dbReference type="HOGENOM" id="CLU_010119_6_5_1"/>
<dbReference type="InParanoid" id="Q7LL04"/>
<dbReference type="OMA" id="GDQMELW"/>
<dbReference type="PhylomeDB" id="Q7LL04"/>
<dbReference type="PRO" id="PR:Q7LL04"/>
<dbReference type="Proteomes" id="UP000002485">
    <property type="component" value="Chromosome III"/>
</dbReference>
<dbReference type="GO" id="GO:0005829">
    <property type="term" value="C:cytosol"/>
    <property type="evidence" value="ECO:0007005"/>
    <property type="project" value="PomBase"/>
</dbReference>
<dbReference type="GO" id="GO:0005634">
    <property type="term" value="C:nucleus"/>
    <property type="evidence" value="ECO:0007005"/>
    <property type="project" value="PomBase"/>
</dbReference>
<dbReference type="GO" id="GO:0016706">
    <property type="term" value="F:2-oxoglutarate-dependent dioxygenase activity"/>
    <property type="evidence" value="ECO:0000250"/>
    <property type="project" value="PomBase"/>
</dbReference>
<dbReference type="GO" id="GO:0044283">
    <property type="term" value="P:small molecule biosynthetic process"/>
    <property type="evidence" value="ECO:0007669"/>
    <property type="project" value="UniProtKB-ARBA"/>
</dbReference>
<dbReference type="FunFam" id="2.60.120.330:FF:000051">
    <property type="entry name" value="Clavaminate synthase-like protein"/>
    <property type="match status" value="1"/>
</dbReference>
<dbReference type="Gene3D" id="2.60.120.330">
    <property type="entry name" value="B-lactam Antibiotic, Isopenicillin N Synthase, Chain"/>
    <property type="match status" value="1"/>
</dbReference>
<dbReference type="InterPro" id="IPR026992">
    <property type="entry name" value="DIOX_N"/>
</dbReference>
<dbReference type="InterPro" id="IPR044861">
    <property type="entry name" value="IPNS-like_FE2OG_OXY"/>
</dbReference>
<dbReference type="InterPro" id="IPR027443">
    <property type="entry name" value="IPNS-like_sf"/>
</dbReference>
<dbReference type="InterPro" id="IPR050231">
    <property type="entry name" value="Iron_ascorbate_oxido_reductase"/>
</dbReference>
<dbReference type="InterPro" id="IPR005123">
    <property type="entry name" value="Oxoglu/Fe-dep_dioxygenase_dom"/>
</dbReference>
<dbReference type="PANTHER" id="PTHR47990">
    <property type="entry name" value="2-OXOGLUTARATE (2OG) AND FE(II)-DEPENDENT OXYGENASE SUPERFAMILY PROTEIN-RELATED"/>
    <property type="match status" value="1"/>
</dbReference>
<dbReference type="Pfam" id="PF03171">
    <property type="entry name" value="2OG-FeII_Oxy"/>
    <property type="match status" value="1"/>
</dbReference>
<dbReference type="Pfam" id="PF14226">
    <property type="entry name" value="DIOX_N"/>
    <property type="match status" value="1"/>
</dbReference>
<dbReference type="SUPFAM" id="SSF51197">
    <property type="entry name" value="Clavaminate synthase-like"/>
    <property type="match status" value="1"/>
</dbReference>
<dbReference type="PROSITE" id="PS51471">
    <property type="entry name" value="FE2OG_OXY"/>
    <property type="match status" value="1"/>
</dbReference>
<comment type="subcellular location">
    <subcellularLocation>
        <location evidence="2">Cytoplasm</location>
    </subcellularLocation>
    <subcellularLocation>
        <location evidence="2">Nucleus</location>
    </subcellularLocation>
</comment>
<comment type="similarity">
    <text evidence="3">Belongs to the UPF0676 family.</text>
</comment>
<protein>
    <recommendedName>
        <fullName>UPF0676 protein C1494.01</fullName>
    </recommendedName>
</protein>
<gene>
    <name type="ORF">SPCC1494.01</name>
</gene>
<sequence>MGSLEVPCIDLSENDTSIVVKELLDACKNWGFVSLKNHGIPLDEIDRTFKLADKFFDIPVEEKQKYLFKGGRLHSGYTGHFGEKLDMEHQSRGDLKESYDLAGFPDPKLENLCPFIAEHMDEFLQFQRHCYKLTLRLLDFFAIGFGIPPDFFSKSHSSEEDVLRLLKYSIPEGVERREDDEDAGAHSDYGSITLLFQRDAAGLEIRPPNFVKDMDWIKVNVQPDVVLVNIADMLQFWTSGKLRSTVHRVRIDPGVKTRQTIAYFVTPDPETPLSPLFEEKTGKDIETVTAGEWIDGRINFTYGYSAPPKGYLGSQNDGIVA</sequence>
<evidence type="ECO:0000255" key="1">
    <source>
        <dbReference type="PROSITE-ProRule" id="PRU00805"/>
    </source>
</evidence>
<evidence type="ECO:0000269" key="2">
    <source>
    </source>
</evidence>
<evidence type="ECO:0000305" key="3"/>
<reference key="1">
    <citation type="journal article" date="2002" name="Nature">
        <title>The genome sequence of Schizosaccharomyces pombe.</title>
        <authorList>
            <person name="Wood V."/>
            <person name="Gwilliam R."/>
            <person name="Rajandream M.A."/>
            <person name="Lyne M.H."/>
            <person name="Lyne R."/>
            <person name="Stewart A."/>
            <person name="Sgouros J.G."/>
            <person name="Peat N."/>
            <person name="Hayles J."/>
            <person name="Baker S.G."/>
            <person name="Basham D."/>
            <person name="Bowman S."/>
            <person name="Brooks K."/>
            <person name="Brown D."/>
            <person name="Brown S."/>
            <person name="Chillingworth T."/>
            <person name="Churcher C.M."/>
            <person name="Collins M."/>
            <person name="Connor R."/>
            <person name="Cronin A."/>
            <person name="Davis P."/>
            <person name="Feltwell T."/>
            <person name="Fraser A."/>
            <person name="Gentles S."/>
            <person name="Goble A."/>
            <person name="Hamlin N."/>
            <person name="Harris D.E."/>
            <person name="Hidalgo J."/>
            <person name="Hodgson G."/>
            <person name="Holroyd S."/>
            <person name="Hornsby T."/>
            <person name="Howarth S."/>
            <person name="Huckle E.J."/>
            <person name="Hunt S."/>
            <person name="Jagels K."/>
            <person name="James K.D."/>
            <person name="Jones L."/>
            <person name="Jones M."/>
            <person name="Leather S."/>
            <person name="McDonald S."/>
            <person name="McLean J."/>
            <person name="Mooney P."/>
            <person name="Moule S."/>
            <person name="Mungall K.L."/>
            <person name="Murphy L.D."/>
            <person name="Niblett D."/>
            <person name="Odell C."/>
            <person name="Oliver K."/>
            <person name="O'Neil S."/>
            <person name="Pearson D."/>
            <person name="Quail M.A."/>
            <person name="Rabbinowitsch E."/>
            <person name="Rutherford K.M."/>
            <person name="Rutter S."/>
            <person name="Saunders D."/>
            <person name="Seeger K."/>
            <person name="Sharp S."/>
            <person name="Skelton J."/>
            <person name="Simmonds M.N."/>
            <person name="Squares R."/>
            <person name="Squares S."/>
            <person name="Stevens K."/>
            <person name="Taylor K."/>
            <person name="Taylor R.G."/>
            <person name="Tivey A."/>
            <person name="Walsh S.V."/>
            <person name="Warren T."/>
            <person name="Whitehead S."/>
            <person name="Woodward J.R."/>
            <person name="Volckaert G."/>
            <person name="Aert R."/>
            <person name="Robben J."/>
            <person name="Grymonprez B."/>
            <person name="Weltjens I."/>
            <person name="Vanstreels E."/>
            <person name="Rieger M."/>
            <person name="Schaefer M."/>
            <person name="Mueller-Auer S."/>
            <person name="Gabel C."/>
            <person name="Fuchs M."/>
            <person name="Duesterhoeft A."/>
            <person name="Fritzc C."/>
            <person name="Holzer E."/>
            <person name="Moestl D."/>
            <person name="Hilbert H."/>
            <person name="Borzym K."/>
            <person name="Langer I."/>
            <person name="Beck A."/>
            <person name="Lehrach H."/>
            <person name="Reinhardt R."/>
            <person name="Pohl T.M."/>
            <person name="Eger P."/>
            <person name="Zimmermann W."/>
            <person name="Wedler H."/>
            <person name="Wambutt R."/>
            <person name="Purnelle B."/>
            <person name="Goffeau A."/>
            <person name="Cadieu E."/>
            <person name="Dreano S."/>
            <person name="Gloux S."/>
            <person name="Lelaure V."/>
            <person name="Mottier S."/>
            <person name="Galibert F."/>
            <person name="Aves S.J."/>
            <person name="Xiang Z."/>
            <person name="Hunt C."/>
            <person name="Moore K."/>
            <person name="Hurst S.M."/>
            <person name="Lucas M."/>
            <person name="Rochet M."/>
            <person name="Gaillardin C."/>
            <person name="Tallada V.A."/>
            <person name="Garzon A."/>
            <person name="Thode G."/>
            <person name="Daga R.R."/>
            <person name="Cruzado L."/>
            <person name="Jimenez J."/>
            <person name="Sanchez M."/>
            <person name="del Rey F."/>
            <person name="Benito J."/>
            <person name="Dominguez A."/>
            <person name="Revuelta J.L."/>
            <person name="Moreno S."/>
            <person name="Armstrong J."/>
            <person name="Forsburg S.L."/>
            <person name="Cerutti L."/>
            <person name="Lowe T."/>
            <person name="McCombie W.R."/>
            <person name="Paulsen I."/>
            <person name="Potashkin J."/>
            <person name="Shpakovski G.V."/>
            <person name="Ussery D."/>
            <person name="Barrell B.G."/>
            <person name="Nurse P."/>
        </authorList>
    </citation>
    <scope>NUCLEOTIDE SEQUENCE [LARGE SCALE GENOMIC DNA]</scope>
    <source>
        <strain>972 / ATCC 24843</strain>
    </source>
</reference>
<reference key="2">
    <citation type="journal article" date="2006" name="Nat. Biotechnol.">
        <title>ORFeome cloning and global analysis of protein localization in the fission yeast Schizosaccharomyces pombe.</title>
        <authorList>
            <person name="Matsuyama A."/>
            <person name="Arai R."/>
            <person name="Yashiroda Y."/>
            <person name="Shirai A."/>
            <person name="Kamata A."/>
            <person name="Sekido S."/>
            <person name="Kobayashi Y."/>
            <person name="Hashimoto A."/>
            <person name="Hamamoto M."/>
            <person name="Hiraoka Y."/>
            <person name="Horinouchi S."/>
            <person name="Yoshida M."/>
        </authorList>
    </citation>
    <scope>SUBCELLULAR LOCATION [LARGE SCALE ANALYSIS]</scope>
</reference>
<name>YQK1_SCHPO</name>